<gene>
    <name evidence="1" type="primary">proB</name>
    <name type="ordered locus">DR_1827</name>
</gene>
<proteinExistence type="inferred from homology"/>
<reference key="1">
    <citation type="journal article" date="1999" name="Science">
        <title>Genome sequence of the radioresistant bacterium Deinococcus radiodurans R1.</title>
        <authorList>
            <person name="White O."/>
            <person name="Eisen J.A."/>
            <person name="Heidelberg J.F."/>
            <person name="Hickey E.K."/>
            <person name="Peterson J.D."/>
            <person name="Dodson R.J."/>
            <person name="Haft D.H."/>
            <person name="Gwinn M.L."/>
            <person name="Nelson W.C."/>
            <person name="Richardson D.L."/>
            <person name="Moffat K.S."/>
            <person name="Qin H."/>
            <person name="Jiang L."/>
            <person name="Pamphile W."/>
            <person name="Crosby M."/>
            <person name="Shen M."/>
            <person name="Vamathevan J.J."/>
            <person name="Lam P."/>
            <person name="McDonald L.A."/>
            <person name="Utterback T.R."/>
            <person name="Zalewski C."/>
            <person name="Makarova K.S."/>
            <person name="Aravind L."/>
            <person name="Daly M.J."/>
            <person name="Minton K.W."/>
            <person name="Fleischmann R.D."/>
            <person name="Ketchum K.A."/>
            <person name="Nelson K.E."/>
            <person name="Salzberg S.L."/>
            <person name="Smith H.O."/>
            <person name="Venter J.C."/>
            <person name="Fraser C.M."/>
        </authorList>
    </citation>
    <scope>NUCLEOTIDE SEQUENCE [LARGE SCALE GENOMIC DNA]</scope>
    <source>
        <strain>ATCC 13939 / DSM 20539 / JCM 16871 / CCUG 27074 / LMG 4051 / NBRC 15346 / NCIMB 9279 / VKM B-1422 / R1</strain>
    </source>
</reference>
<comment type="function">
    <text evidence="1">Catalyzes the transfer of a phosphate group to glutamate to form L-glutamate 5-phosphate.</text>
</comment>
<comment type="catalytic activity">
    <reaction evidence="1">
        <text>L-glutamate + ATP = L-glutamyl 5-phosphate + ADP</text>
        <dbReference type="Rhea" id="RHEA:14877"/>
        <dbReference type="ChEBI" id="CHEBI:29985"/>
        <dbReference type="ChEBI" id="CHEBI:30616"/>
        <dbReference type="ChEBI" id="CHEBI:58274"/>
        <dbReference type="ChEBI" id="CHEBI:456216"/>
        <dbReference type="EC" id="2.7.2.11"/>
    </reaction>
</comment>
<comment type="pathway">
    <text evidence="1">Amino-acid biosynthesis; L-proline biosynthesis; L-glutamate 5-semialdehyde from L-glutamate: step 1/2.</text>
</comment>
<comment type="subcellular location">
    <subcellularLocation>
        <location evidence="1">Cytoplasm</location>
    </subcellularLocation>
</comment>
<comment type="similarity">
    <text evidence="1">Belongs to the glutamate 5-kinase family.</text>
</comment>
<dbReference type="EC" id="2.7.2.11" evidence="1"/>
<dbReference type="EMBL" id="AE000513">
    <property type="protein sequence ID" value="AAF11381.1"/>
    <property type="molecule type" value="Genomic_DNA"/>
</dbReference>
<dbReference type="PIR" id="E75348">
    <property type="entry name" value="E75348"/>
</dbReference>
<dbReference type="RefSeq" id="NP_295550.1">
    <property type="nucleotide sequence ID" value="NC_001263.1"/>
</dbReference>
<dbReference type="RefSeq" id="WP_010888462.1">
    <property type="nucleotide sequence ID" value="NC_001263.1"/>
</dbReference>
<dbReference type="SMR" id="Q9RTD8"/>
<dbReference type="FunCoup" id="Q9RTD8">
    <property type="interactions" value="337"/>
</dbReference>
<dbReference type="STRING" id="243230.DR_1827"/>
<dbReference type="PaxDb" id="243230-DR_1827"/>
<dbReference type="DNASU" id="1799484"/>
<dbReference type="EnsemblBacteria" id="AAF11381">
    <property type="protein sequence ID" value="AAF11381"/>
    <property type="gene ID" value="DR_1827"/>
</dbReference>
<dbReference type="GeneID" id="69518068"/>
<dbReference type="KEGG" id="dra:DR_1827"/>
<dbReference type="PATRIC" id="fig|243230.17.peg.2040"/>
<dbReference type="eggNOG" id="COG0263">
    <property type="taxonomic scope" value="Bacteria"/>
</dbReference>
<dbReference type="HOGENOM" id="CLU_025400_2_0_0"/>
<dbReference type="InParanoid" id="Q9RTD8"/>
<dbReference type="OrthoDB" id="9804434at2"/>
<dbReference type="UniPathway" id="UPA00098">
    <property type="reaction ID" value="UER00359"/>
</dbReference>
<dbReference type="Proteomes" id="UP000002524">
    <property type="component" value="Chromosome 1"/>
</dbReference>
<dbReference type="GO" id="GO:0005829">
    <property type="term" value="C:cytosol"/>
    <property type="evidence" value="ECO:0000318"/>
    <property type="project" value="GO_Central"/>
</dbReference>
<dbReference type="GO" id="GO:0005524">
    <property type="term" value="F:ATP binding"/>
    <property type="evidence" value="ECO:0007669"/>
    <property type="project" value="UniProtKB-KW"/>
</dbReference>
<dbReference type="GO" id="GO:0004349">
    <property type="term" value="F:glutamate 5-kinase activity"/>
    <property type="evidence" value="ECO:0000318"/>
    <property type="project" value="GO_Central"/>
</dbReference>
<dbReference type="GO" id="GO:0003723">
    <property type="term" value="F:RNA binding"/>
    <property type="evidence" value="ECO:0007669"/>
    <property type="project" value="InterPro"/>
</dbReference>
<dbReference type="GO" id="GO:0055129">
    <property type="term" value="P:L-proline biosynthetic process"/>
    <property type="evidence" value="ECO:0007669"/>
    <property type="project" value="UniProtKB-UniRule"/>
</dbReference>
<dbReference type="GO" id="GO:0006561">
    <property type="term" value="P:proline biosynthetic process"/>
    <property type="evidence" value="ECO:0000318"/>
    <property type="project" value="GO_Central"/>
</dbReference>
<dbReference type="CDD" id="cd04242">
    <property type="entry name" value="AAK_G5K_ProB"/>
    <property type="match status" value="1"/>
</dbReference>
<dbReference type="CDD" id="cd21157">
    <property type="entry name" value="PUA_G5K"/>
    <property type="match status" value="1"/>
</dbReference>
<dbReference type="FunFam" id="2.30.130.10:FF:000007">
    <property type="entry name" value="Glutamate 5-kinase"/>
    <property type="match status" value="1"/>
</dbReference>
<dbReference type="FunFam" id="3.40.1160.10:FF:000018">
    <property type="entry name" value="Glutamate 5-kinase"/>
    <property type="match status" value="1"/>
</dbReference>
<dbReference type="Gene3D" id="3.40.1160.10">
    <property type="entry name" value="Acetylglutamate kinase-like"/>
    <property type="match status" value="1"/>
</dbReference>
<dbReference type="Gene3D" id="2.30.130.10">
    <property type="entry name" value="PUA domain"/>
    <property type="match status" value="1"/>
</dbReference>
<dbReference type="HAMAP" id="MF_00456">
    <property type="entry name" value="ProB"/>
    <property type="match status" value="1"/>
</dbReference>
<dbReference type="InterPro" id="IPR036393">
    <property type="entry name" value="AceGlu_kinase-like_sf"/>
</dbReference>
<dbReference type="InterPro" id="IPR001048">
    <property type="entry name" value="Asp/Glu/Uridylate_kinase"/>
</dbReference>
<dbReference type="InterPro" id="IPR041739">
    <property type="entry name" value="G5K_ProB"/>
</dbReference>
<dbReference type="InterPro" id="IPR001057">
    <property type="entry name" value="Glu/AcGlu_kinase"/>
</dbReference>
<dbReference type="InterPro" id="IPR011529">
    <property type="entry name" value="Glu_5kinase"/>
</dbReference>
<dbReference type="InterPro" id="IPR005715">
    <property type="entry name" value="Glu_5kinase/COase_Synthase"/>
</dbReference>
<dbReference type="InterPro" id="IPR019797">
    <property type="entry name" value="Glutamate_5-kinase_CS"/>
</dbReference>
<dbReference type="InterPro" id="IPR002478">
    <property type="entry name" value="PUA"/>
</dbReference>
<dbReference type="InterPro" id="IPR015947">
    <property type="entry name" value="PUA-like_sf"/>
</dbReference>
<dbReference type="InterPro" id="IPR036974">
    <property type="entry name" value="PUA_sf"/>
</dbReference>
<dbReference type="NCBIfam" id="TIGR01027">
    <property type="entry name" value="proB"/>
    <property type="match status" value="1"/>
</dbReference>
<dbReference type="PANTHER" id="PTHR43654">
    <property type="entry name" value="GLUTAMATE 5-KINASE"/>
    <property type="match status" value="1"/>
</dbReference>
<dbReference type="PANTHER" id="PTHR43654:SF1">
    <property type="entry name" value="ISOPENTENYL PHOSPHATE KINASE"/>
    <property type="match status" value="1"/>
</dbReference>
<dbReference type="Pfam" id="PF00696">
    <property type="entry name" value="AA_kinase"/>
    <property type="match status" value="1"/>
</dbReference>
<dbReference type="Pfam" id="PF01472">
    <property type="entry name" value="PUA"/>
    <property type="match status" value="1"/>
</dbReference>
<dbReference type="PIRSF" id="PIRSF000729">
    <property type="entry name" value="GK"/>
    <property type="match status" value="1"/>
</dbReference>
<dbReference type="PRINTS" id="PR00474">
    <property type="entry name" value="GLU5KINASE"/>
</dbReference>
<dbReference type="SMART" id="SM00359">
    <property type="entry name" value="PUA"/>
    <property type="match status" value="1"/>
</dbReference>
<dbReference type="SUPFAM" id="SSF53633">
    <property type="entry name" value="Carbamate kinase-like"/>
    <property type="match status" value="1"/>
</dbReference>
<dbReference type="SUPFAM" id="SSF88697">
    <property type="entry name" value="PUA domain-like"/>
    <property type="match status" value="1"/>
</dbReference>
<dbReference type="PROSITE" id="PS00902">
    <property type="entry name" value="GLUTAMATE_5_KINASE"/>
    <property type="match status" value="1"/>
</dbReference>
<dbReference type="PROSITE" id="PS50890">
    <property type="entry name" value="PUA"/>
    <property type="match status" value="1"/>
</dbReference>
<evidence type="ECO:0000255" key="1">
    <source>
        <dbReference type="HAMAP-Rule" id="MF_00456"/>
    </source>
</evidence>
<feature type="chain" id="PRO_0000109666" description="Glutamate 5-kinase">
    <location>
        <begin position="1"/>
        <end position="363"/>
    </location>
</feature>
<feature type="domain" description="PUA" evidence="1">
    <location>
        <begin position="271"/>
        <end position="349"/>
    </location>
</feature>
<feature type="binding site" evidence="1">
    <location>
        <position position="6"/>
    </location>
    <ligand>
        <name>ATP</name>
        <dbReference type="ChEBI" id="CHEBI:30616"/>
    </ligand>
</feature>
<feature type="binding site" evidence="1">
    <location>
        <position position="46"/>
    </location>
    <ligand>
        <name>substrate</name>
    </ligand>
</feature>
<feature type="binding site" evidence="1">
    <location>
        <position position="133"/>
    </location>
    <ligand>
        <name>substrate</name>
    </ligand>
</feature>
<feature type="binding site" evidence="1">
    <location>
        <position position="145"/>
    </location>
    <ligand>
        <name>substrate</name>
    </ligand>
</feature>
<feature type="binding site" evidence="1">
    <location>
        <begin position="165"/>
        <end position="166"/>
    </location>
    <ligand>
        <name>ATP</name>
        <dbReference type="ChEBI" id="CHEBI:30616"/>
    </ligand>
</feature>
<feature type="binding site" evidence="1">
    <location>
        <begin position="207"/>
        <end position="213"/>
    </location>
    <ligand>
        <name>ATP</name>
        <dbReference type="ChEBI" id="CHEBI:30616"/>
    </ligand>
</feature>
<sequence>MRVVLKLGTSVLTAGTDRLHRPRLVDLMRDIAAVSAQGHEVVLVSSGAVTAGWEALGFPPRERTLAEKQLLAAVGQVQLMHLYTSLAELYGLRSAQLLLTADDFRERTRYLNARTTLEGCLSRGVLPVINENDTVAVEQIKVGDNDTLSAFVANLVEADLLLILTDAPGLYTADPRTHPDATLIPVVERVTPDIWALAGGAGSHRGTGGMHTKIQAAEIATRAGTPVVIAPGDLPEALRRVVDGEALGTRFLAHGTRLEARKRWILAEIAHGRLLLDGGAAQAVRERGSSLLPAGIRQVEGDFERGHTVRLLAPDGQELGRGLTRYRADDLRRVCGHHSREIEALLGYTYGEEAVHRDDLVLL</sequence>
<name>PROB_DEIRA</name>
<protein>
    <recommendedName>
        <fullName evidence="1">Glutamate 5-kinase</fullName>
        <ecNumber evidence="1">2.7.2.11</ecNumber>
    </recommendedName>
    <alternativeName>
        <fullName evidence="1">Gamma-glutamyl kinase</fullName>
        <shortName evidence="1">GK</shortName>
    </alternativeName>
</protein>
<organism>
    <name type="scientific">Deinococcus radiodurans (strain ATCC 13939 / DSM 20539 / JCM 16871 / CCUG 27074 / LMG 4051 / NBRC 15346 / NCIMB 9279 / VKM B-1422 / R1)</name>
    <dbReference type="NCBI Taxonomy" id="243230"/>
    <lineage>
        <taxon>Bacteria</taxon>
        <taxon>Thermotogati</taxon>
        <taxon>Deinococcota</taxon>
        <taxon>Deinococci</taxon>
        <taxon>Deinococcales</taxon>
        <taxon>Deinococcaceae</taxon>
        <taxon>Deinococcus</taxon>
    </lineage>
</organism>
<keyword id="KW-0028">Amino-acid biosynthesis</keyword>
<keyword id="KW-0067">ATP-binding</keyword>
<keyword id="KW-0963">Cytoplasm</keyword>
<keyword id="KW-0418">Kinase</keyword>
<keyword id="KW-0547">Nucleotide-binding</keyword>
<keyword id="KW-0641">Proline biosynthesis</keyword>
<keyword id="KW-1185">Reference proteome</keyword>
<keyword id="KW-0808">Transferase</keyword>
<accession>Q9RTD8</accession>